<protein>
    <recommendedName>
        <fullName evidence="1">2,3-bisphosphoglycerate-dependent phosphoglycerate mutase 2</fullName>
        <shortName evidence="1">BPG-dependent PGAM 2</shortName>
        <shortName evidence="1">PGAM 2</shortName>
        <shortName evidence="1">Phosphoglyceromutase 2</shortName>
        <shortName evidence="1">dPGM 2</shortName>
        <ecNumber evidence="1">5.4.2.11</ecNumber>
    </recommendedName>
</protein>
<keyword id="KW-0312">Gluconeogenesis</keyword>
<keyword id="KW-0324">Glycolysis</keyword>
<keyword id="KW-0413">Isomerase</keyword>
<keyword id="KW-1185">Reference proteome</keyword>
<feature type="chain" id="PRO_0000179898" description="2,3-bisphosphoglycerate-dependent phosphoglycerate mutase 2">
    <location>
        <begin position="1"/>
        <end position="249"/>
    </location>
</feature>
<feature type="active site" description="Tele-phosphohistidine intermediate" evidence="1">
    <location>
        <position position="9"/>
    </location>
</feature>
<feature type="active site" description="Proton donor/acceptor" evidence="1">
    <location>
        <position position="87"/>
    </location>
</feature>
<feature type="binding site" evidence="1">
    <location>
        <begin position="8"/>
        <end position="15"/>
    </location>
    <ligand>
        <name>substrate</name>
    </ligand>
</feature>
<feature type="binding site" evidence="1">
    <location>
        <begin position="21"/>
        <end position="22"/>
    </location>
    <ligand>
        <name>substrate</name>
    </ligand>
</feature>
<feature type="binding site" evidence="1">
    <location>
        <position position="60"/>
    </location>
    <ligand>
        <name>substrate</name>
    </ligand>
</feature>
<feature type="binding site" evidence="1">
    <location>
        <begin position="87"/>
        <end position="90"/>
    </location>
    <ligand>
        <name>substrate</name>
    </ligand>
</feature>
<feature type="binding site" evidence="1">
    <location>
        <position position="98"/>
    </location>
    <ligand>
        <name>substrate</name>
    </ligand>
</feature>
<feature type="binding site" evidence="1">
    <location>
        <begin position="114"/>
        <end position="115"/>
    </location>
    <ligand>
        <name>substrate</name>
    </ligand>
</feature>
<feature type="binding site" evidence="1">
    <location>
        <begin position="183"/>
        <end position="184"/>
    </location>
    <ligand>
        <name>substrate</name>
    </ligand>
</feature>
<feature type="site" description="Transition state stabilizer" evidence="1">
    <location>
        <position position="182"/>
    </location>
</feature>
<gene>
    <name evidence="1" type="primary">gpmA2</name>
    <name type="ordered locus">NE1780</name>
</gene>
<reference key="1">
    <citation type="journal article" date="2003" name="J. Bacteriol.">
        <title>Complete genome sequence of the ammonia-oxidizing bacterium and obligate chemolithoautotroph Nitrosomonas europaea.</title>
        <authorList>
            <person name="Chain P."/>
            <person name="Lamerdin J.E."/>
            <person name="Larimer F.W."/>
            <person name="Regala W."/>
            <person name="Lao V."/>
            <person name="Land M.L."/>
            <person name="Hauser L."/>
            <person name="Hooper A.B."/>
            <person name="Klotz M.G."/>
            <person name="Norton J."/>
            <person name="Sayavedra-Soto L.A."/>
            <person name="Arciero D.M."/>
            <person name="Hommes N.G."/>
            <person name="Whittaker M.M."/>
            <person name="Arp D.J."/>
        </authorList>
    </citation>
    <scope>NUCLEOTIDE SEQUENCE [LARGE SCALE GENOMIC DNA]</scope>
    <source>
        <strain>ATCC 19718 / CIP 103999 / KCTC 2705 / NBRC 14298</strain>
    </source>
</reference>
<evidence type="ECO:0000255" key="1">
    <source>
        <dbReference type="HAMAP-Rule" id="MF_01039"/>
    </source>
</evidence>
<accession>Q82TU0</accession>
<organism>
    <name type="scientific">Nitrosomonas europaea (strain ATCC 19718 / CIP 103999 / KCTC 2705 / NBRC 14298)</name>
    <dbReference type="NCBI Taxonomy" id="228410"/>
    <lineage>
        <taxon>Bacteria</taxon>
        <taxon>Pseudomonadati</taxon>
        <taxon>Pseudomonadota</taxon>
        <taxon>Betaproteobacteria</taxon>
        <taxon>Nitrosomonadales</taxon>
        <taxon>Nitrosomonadaceae</taxon>
        <taxon>Nitrosomonas</taxon>
    </lineage>
</organism>
<comment type="function">
    <text evidence="1">Catalyzes the interconversion of 2-phosphoglycerate and 3-phosphoglycerate.</text>
</comment>
<comment type="catalytic activity">
    <reaction evidence="1">
        <text>(2R)-2-phosphoglycerate = (2R)-3-phosphoglycerate</text>
        <dbReference type="Rhea" id="RHEA:15901"/>
        <dbReference type="ChEBI" id="CHEBI:58272"/>
        <dbReference type="ChEBI" id="CHEBI:58289"/>
        <dbReference type="EC" id="5.4.2.11"/>
    </reaction>
</comment>
<comment type="pathway">
    <text evidence="1">Carbohydrate degradation; glycolysis; pyruvate from D-glyceraldehyde 3-phosphate: step 3/5.</text>
</comment>
<comment type="subunit">
    <text evidence="1">Homodimer.</text>
</comment>
<comment type="similarity">
    <text evidence="1">Belongs to the phosphoglycerate mutase family. BPG-dependent PGAM subfamily.</text>
</comment>
<proteinExistence type="inferred from homology"/>
<sequence length="249" mass="28317">MKKLVLLRHGESIWNQENRFTGWTDVDLTPKGLKEAEEAGRLLRENGFSFDIAYTSLLKRAIRTLWIALDEMDQMWTPIELNWRLNERHYGALQGLNKAETAKQYGDEQVLVWRRSYDIRPPSITINDERYPGFDLRYRNMSSGDIPLAESLKDTVARFLPYWNQSIAPQIKAEKKVIIAAHGNSLRALIKHLDNISDQDILNCNIPTGIPLVYELDDDLKPLNSYYLGDAGQIGEAISAVANQGKSGA</sequence>
<name>GPMA2_NITEU</name>
<dbReference type="EC" id="5.4.2.11" evidence="1"/>
<dbReference type="EMBL" id="AL954747">
    <property type="protein sequence ID" value="CAD85691.1"/>
    <property type="molecule type" value="Genomic_DNA"/>
</dbReference>
<dbReference type="SMR" id="Q82TU0"/>
<dbReference type="STRING" id="228410.NE1780"/>
<dbReference type="GeneID" id="87104942"/>
<dbReference type="KEGG" id="neu:NE1780"/>
<dbReference type="eggNOG" id="COG0588">
    <property type="taxonomic scope" value="Bacteria"/>
</dbReference>
<dbReference type="HOGENOM" id="CLU_033323_1_1_4"/>
<dbReference type="OrthoDB" id="9781415at2"/>
<dbReference type="PhylomeDB" id="Q82TU0"/>
<dbReference type="UniPathway" id="UPA00109">
    <property type="reaction ID" value="UER00186"/>
</dbReference>
<dbReference type="Proteomes" id="UP000001416">
    <property type="component" value="Chromosome"/>
</dbReference>
<dbReference type="GO" id="GO:0004619">
    <property type="term" value="F:phosphoglycerate mutase activity"/>
    <property type="evidence" value="ECO:0007669"/>
    <property type="project" value="UniProtKB-EC"/>
</dbReference>
<dbReference type="GO" id="GO:0006094">
    <property type="term" value="P:gluconeogenesis"/>
    <property type="evidence" value="ECO:0007669"/>
    <property type="project" value="UniProtKB-UniRule"/>
</dbReference>
<dbReference type="GO" id="GO:0006096">
    <property type="term" value="P:glycolytic process"/>
    <property type="evidence" value="ECO:0007669"/>
    <property type="project" value="UniProtKB-UniRule"/>
</dbReference>
<dbReference type="CDD" id="cd07067">
    <property type="entry name" value="HP_PGM_like"/>
    <property type="match status" value="1"/>
</dbReference>
<dbReference type="FunFam" id="3.40.50.1240:FF:000003">
    <property type="entry name" value="2,3-bisphosphoglycerate-dependent phosphoglycerate mutase"/>
    <property type="match status" value="1"/>
</dbReference>
<dbReference type="Gene3D" id="3.40.50.1240">
    <property type="entry name" value="Phosphoglycerate mutase-like"/>
    <property type="match status" value="1"/>
</dbReference>
<dbReference type="HAMAP" id="MF_01039">
    <property type="entry name" value="PGAM_GpmA"/>
    <property type="match status" value="1"/>
</dbReference>
<dbReference type="InterPro" id="IPR013078">
    <property type="entry name" value="His_Pase_superF_clade-1"/>
</dbReference>
<dbReference type="InterPro" id="IPR029033">
    <property type="entry name" value="His_PPase_superfam"/>
</dbReference>
<dbReference type="InterPro" id="IPR001345">
    <property type="entry name" value="PG/BPGM_mutase_AS"/>
</dbReference>
<dbReference type="InterPro" id="IPR005952">
    <property type="entry name" value="Phosphogly_mut1"/>
</dbReference>
<dbReference type="NCBIfam" id="TIGR01258">
    <property type="entry name" value="pgm_1"/>
    <property type="match status" value="1"/>
</dbReference>
<dbReference type="NCBIfam" id="NF010713">
    <property type="entry name" value="PRK14115.1"/>
    <property type="match status" value="1"/>
</dbReference>
<dbReference type="PANTHER" id="PTHR11931">
    <property type="entry name" value="PHOSPHOGLYCERATE MUTASE"/>
    <property type="match status" value="1"/>
</dbReference>
<dbReference type="Pfam" id="PF00300">
    <property type="entry name" value="His_Phos_1"/>
    <property type="match status" value="1"/>
</dbReference>
<dbReference type="PIRSF" id="PIRSF000709">
    <property type="entry name" value="6PFK_2-Ptase"/>
    <property type="match status" value="1"/>
</dbReference>
<dbReference type="SMART" id="SM00855">
    <property type="entry name" value="PGAM"/>
    <property type="match status" value="1"/>
</dbReference>
<dbReference type="SUPFAM" id="SSF53254">
    <property type="entry name" value="Phosphoglycerate mutase-like"/>
    <property type="match status" value="1"/>
</dbReference>
<dbReference type="PROSITE" id="PS00175">
    <property type="entry name" value="PG_MUTASE"/>
    <property type="match status" value="1"/>
</dbReference>